<dbReference type="EC" id="3.1.5.-" evidence="1"/>
<dbReference type="EMBL" id="FO080583">
    <property type="protein sequence ID" value="CCD64860.1"/>
    <property type="molecule type" value="Genomic_DNA"/>
</dbReference>
<dbReference type="EMBL" id="FO080583">
    <property type="protein sequence ID" value="CCD64861.1"/>
    <property type="molecule type" value="Genomic_DNA"/>
</dbReference>
<dbReference type="PIR" id="T27765">
    <property type="entry name" value="T27765"/>
</dbReference>
<dbReference type="RefSeq" id="NP_495054.1">
    <molecule id="Q09374-1"/>
    <property type="nucleotide sequence ID" value="NM_062653.4"/>
</dbReference>
<dbReference type="RefSeq" id="NP_495055.1">
    <molecule id="Q09374-2"/>
    <property type="nucleotide sequence ID" value="NM_062654.6"/>
</dbReference>
<dbReference type="PDB" id="6PWY">
    <property type="method" value="X-ray"/>
    <property type="resolution" value="1.81 A"/>
    <property type="chains" value="A/B/C/D=41-565"/>
</dbReference>
<dbReference type="PDBsum" id="6PWY"/>
<dbReference type="SMR" id="Q09374"/>
<dbReference type="BioGRID" id="39279">
    <property type="interactions" value="1"/>
</dbReference>
<dbReference type="FunCoup" id="Q09374">
    <property type="interactions" value="1894"/>
</dbReference>
<dbReference type="IntAct" id="Q09374">
    <property type="interactions" value="1"/>
</dbReference>
<dbReference type="STRING" id="6239.ZK177.8a.1"/>
<dbReference type="PaxDb" id="6239-ZK177.8a"/>
<dbReference type="PeptideAtlas" id="Q09374"/>
<dbReference type="EnsemblMetazoa" id="ZK177.8a.1">
    <molecule id="Q09374-1"/>
    <property type="protein sequence ID" value="ZK177.8a.1"/>
    <property type="gene ID" value="WBGene00022673"/>
</dbReference>
<dbReference type="EnsemblMetazoa" id="ZK177.8a.2">
    <molecule id="Q09374-1"/>
    <property type="protein sequence ID" value="ZK177.8a.2"/>
    <property type="gene ID" value="WBGene00022673"/>
</dbReference>
<dbReference type="EnsemblMetazoa" id="ZK177.8b.1">
    <molecule id="Q09374-2"/>
    <property type="protein sequence ID" value="ZK177.8b.1"/>
    <property type="gene ID" value="WBGene00022673"/>
</dbReference>
<dbReference type="EnsemblMetazoa" id="ZK177.8b.2">
    <molecule id="Q09374-2"/>
    <property type="protein sequence ID" value="ZK177.8b.2"/>
    <property type="gene ID" value="WBGene00022673"/>
</dbReference>
<dbReference type="EnsemblMetazoa" id="ZK177.8b.3">
    <molecule id="Q09374-2"/>
    <property type="protein sequence ID" value="ZK177.8b.3"/>
    <property type="gene ID" value="WBGene00022673"/>
</dbReference>
<dbReference type="GeneID" id="173937"/>
<dbReference type="KEGG" id="cel:CELE_ZK177.8"/>
<dbReference type="UCSC" id="ZK177.8a">
    <molecule id="Q09374-1"/>
    <property type="organism name" value="c. elegans"/>
</dbReference>
<dbReference type="AGR" id="WB:WBGene00022673"/>
<dbReference type="CTD" id="173937"/>
<dbReference type="WormBase" id="ZK177.8a">
    <molecule id="Q09374-1"/>
    <property type="protein sequence ID" value="CE07618"/>
    <property type="gene ID" value="WBGene00022673"/>
    <property type="gene designation" value="sahd-1"/>
</dbReference>
<dbReference type="WormBase" id="ZK177.8b">
    <molecule id="Q09374-2"/>
    <property type="protein sequence ID" value="CE02097"/>
    <property type="gene ID" value="WBGene00022673"/>
    <property type="gene designation" value="sahd-1"/>
</dbReference>
<dbReference type="eggNOG" id="KOG2681">
    <property type="taxonomic scope" value="Eukaryota"/>
</dbReference>
<dbReference type="GeneTree" id="ENSGT00390000013867"/>
<dbReference type="InParanoid" id="Q09374"/>
<dbReference type="OMA" id="NCEHSRF"/>
<dbReference type="OrthoDB" id="9991235at2759"/>
<dbReference type="PhylomeDB" id="Q09374"/>
<dbReference type="Reactome" id="R-CEL-8956319">
    <property type="pathway name" value="Nucleotide catabolism"/>
</dbReference>
<dbReference type="PRO" id="PR:Q09374"/>
<dbReference type="Proteomes" id="UP000001940">
    <property type="component" value="Chromosome II"/>
</dbReference>
<dbReference type="Bgee" id="WBGene00022673">
    <property type="expression patterns" value="Expressed in germ line (C elegans) and 4 other cell types or tissues"/>
</dbReference>
<dbReference type="GO" id="GO:0005694">
    <property type="term" value="C:chromosome"/>
    <property type="evidence" value="ECO:0007669"/>
    <property type="project" value="UniProtKB-SubCell"/>
</dbReference>
<dbReference type="GO" id="GO:0005634">
    <property type="term" value="C:nucleus"/>
    <property type="evidence" value="ECO:0000318"/>
    <property type="project" value="GO_Central"/>
</dbReference>
<dbReference type="GO" id="GO:0106375">
    <property type="term" value="F:deoxynucleoside triphosphate hydrolase activity"/>
    <property type="evidence" value="ECO:0000314"/>
    <property type="project" value="UniProtKB"/>
</dbReference>
<dbReference type="GO" id="GO:0008832">
    <property type="term" value="F:dGTPase activity"/>
    <property type="evidence" value="ECO:0000314"/>
    <property type="project" value="UniProtKB"/>
</dbReference>
<dbReference type="GO" id="GO:0005525">
    <property type="term" value="F:GTP binding"/>
    <property type="evidence" value="ECO:0007669"/>
    <property type="project" value="UniProtKB-KW"/>
</dbReference>
<dbReference type="GO" id="GO:0046872">
    <property type="term" value="F:metal ion binding"/>
    <property type="evidence" value="ECO:0007669"/>
    <property type="project" value="UniProtKB-KW"/>
</dbReference>
<dbReference type="GO" id="GO:0042803">
    <property type="term" value="F:protein homodimerization activity"/>
    <property type="evidence" value="ECO:0000314"/>
    <property type="project" value="UniProtKB"/>
</dbReference>
<dbReference type="GO" id="GO:0009264">
    <property type="term" value="P:deoxyribonucleotide catabolic process"/>
    <property type="evidence" value="ECO:0000314"/>
    <property type="project" value="UniProtKB"/>
</dbReference>
<dbReference type="GO" id="GO:0006203">
    <property type="term" value="P:dGTP catabolic process"/>
    <property type="evidence" value="ECO:0000314"/>
    <property type="project" value="UniProtKB"/>
</dbReference>
<dbReference type="CDD" id="cd00077">
    <property type="entry name" value="HDc"/>
    <property type="match status" value="1"/>
</dbReference>
<dbReference type="FunFam" id="1.10.3210.10:FF:000039">
    <property type="entry name" value="Protein CBG02420"/>
    <property type="match status" value="1"/>
</dbReference>
<dbReference type="Gene3D" id="1.10.3210.10">
    <property type="entry name" value="Hypothetical protein af1432"/>
    <property type="match status" value="1"/>
</dbReference>
<dbReference type="InterPro" id="IPR050135">
    <property type="entry name" value="dGTPase-like"/>
</dbReference>
<dbReference type="InterPro" id="IPR003607">
    <property type="entry name" value="HD/PDEase_dom"/>
</dbReference>
<dbReference type="InterPro" id="IPR006674">
    <property type="entry name" value="HD_domain"/>
</dbReference>
<dbReference type="PANTHER" id="PTHR11373">
    <property type="entry name" value="DEOXYNUCLEOSIDE TRIPHOSPHATE TRIPHOSPHOHYDROLASE"/>
    <property type="match status" value="1"/>
</dbReference>
<dbReference type="PANTHER" id="PTHR11373:SF4">
    <property type="entry name" value="DEOXYNUCLEOSIDE TRIPHOSPHATE TRIPHOSPHOHYDROLASE SAMHD1"/>
    <property type="match status" value="1"/>
</dbReference>
<dbReference type="Pfam" id="PF01966">
    <property type="entry name" value="HD"/>
    <property type="match status" value="1"/>
</dbReference>
<dbReference type="SMART" id="SM00471">
    <property type="entry name" value="HDc"/>
    <property type="match status" value="1"/>
</dbReference>
<dbReference type="SUPFAM" id="SSF109604">
    <property type="entry name" value="HD-domain/PDEase-like"/>
    <property type="match status" value="1"/>
</dbReference>
<dbReference type="PROSITE" id="PS51831">
    <property type="entry name" value="HD"/>
    <property type="match status" value="1"/>
</dbReference>
<feature type="chain" id="PRO_0000065507" description="Deoxynucleoside triphosphate triphosphohydrolase sahd-1">
    <location>
        <begin position="1"/>
        <end position="587"/>
    </location>
</feature>
<feature type="domain" description="HD" evidence="2">
    <location>
        <begin position="92"/>
        <end position="262"/>
    </location>
</feature>
<feature type="region of interest" description="Disordered" evidence="3">
    <location>
        <begin position="554"/>
        <end position="587"/>
    </location>
</feature>
<feature type="binding site" evidence="1">
    <location>
        <position position="95"/>
    </location>
    <ligand>
        <name>Zn(2+)</name>
        <dbReference type="ChEBI" id="CHEBI:29105"/>
    </ligand>
</feature>
<feature type="binding site" evidence="1">
    <location>
        <position position="134"/>
    </location>
    <ligand>
        <name>Zn(2+)</name>
        <dbReference type="ChEBI" id="CHEBI:29105"/>
    </ligand>
</feature>
<feature type="binding site" evidence="1">
    <location>
        <position position="135"/>
    </location>
    <ligand>
        <name>Zn(2+)</name>
        <dbReference type="ChEBI" id="CHEBI:29105"/>
    </ligand>
</feature>
<feature type="binding site" evidence="1">
    <location>
        <position position="257"/>
    </location>
    <ligand>
        <name>Zn(2+)</name>
        <dbReference type="ChEBI" id="CHEBI:29105"/>
    </ligand>
</feature>
<feature type="modified residue" description="Phosphothreonine" evidence="1">
    <location>
        <position position="558"/>
    </location>
</feature>
<feature type="splice variant" id="VSP_002452" description="In isoform b." evidence="6">
    <location>
        <begin position="1"/>
        <end position="34"/>
    </location>
</feature>
<feature type="mutagenesis site" description="Abolishes dNTPase activity." evidence="4">
    <original>HD</original>
    <variation>RN</variation>
    <location>
        <begin position="134"/>
        <end position="135"/>
    </location>
</feature>
<feature type="strand" evidence="8">
    <location>
        <begin position="43"/>
        <end position="48"/>
    </location>
</feature>
<feature type="turn" evidence="8">
    <location>
        <begin position="49"/>
        <end position="51"/>
    </location>
</feature>
<feature type="strand" evidence="8">
    <location>
        <begin position="52"/>
        <end position="56"/>
    </location>
</feature>
<feature type="helix" evidence="8">
    <location>
        <begin position="60"/>
        <end position="64"/>
    </location>
</feature>
<feature type="helix" evidence="8">
    <location>
        <begin position="67"/>
        <end position="70"/>
    </location>
</feature>
<feature type="helix" evidence="8">
    <location>
        <begin position="71"/>
        <end position="74"/>
    </location>
</feature>
<feature type="helix" evidence="8">
    <location>
        <begin position="79"/>
        <end position="83"/>
    </location>
</feature>
<feature type="helix" evidence="8">
    <location>
        <begin position="92"/>
        <end position="113"/>
    </location>
</feature>
<feature type="helix" evidence="8">
    <location>
        <begin position="115"/>
        <end position="117"/>
    </location>
</feature>
<feature type="helix" evidence="8">
    <location>
        <begin position="121"/>
        <end position="133"/>
    </location>
</feature>
<feature type="turn" evidence="8">
    <location>
        <begin position="134"/>
        <end position="137"/>
    </location>
</feature>
<feature type="helix" evidence="8">
    <location>
        <begin position="142"/>
        <end position="145"/>
    </location>
</feature>
<feature type="helix" evidence="8">
    <location>
        <begin position="148"/>
        <end position="153"/>
    </location>
</feature>
<feature type="helix" evidence="8">
    <location>
        <begin position="159"/>
        <end position="171"/>
    </location>
</feature>
<feature type="helix" evidence="8">
    <location>
        <begin position="174"/>
        <end position="184"/>
    </location>
</feature>
<feature type="helix" evidence="8">
    <location>
        <begin position="188"/>
        <end position="203"/>
    </location>
</feature>
<feature type="helix" evidence="8">
    <location>
        <begin position="208"/>
        <end position="211"/>
    </location>
</feature>
<feature type="helix" evidence="8">
    <location>
        <begin position="215"/>
        <end position="217"/>
    </location>
</feature>
<feature type="helix" evidence="8">
    <location>
        <begin position="220"/>
        <end position="230"/>
    </location>
</feature>
<feature type="strand" evidence="8">
    <location>
        <begin position="234"/>
        <end position="236"/>
    </location>
</feature>
<feature type="helix" evidence="8">
    <location>
        <begin position="238"/>
        <end position="245"/>
    </location>
</feature>
<feature type="turn" evidence="8">
    <location>
        <begin position="250"/>
        <end position="252"/>
    </location>
</feature>
<feature type="helix" evidence="8">
    <location>
        <begin position="256"/>
        <end position="269"/>
    </location>
</feature>
<feature type="helix" evidence="8">
    <location>
        <begin position="277"/>
        <end position="284"/>
    </location>
</feature>
<feature type="strand" evidence="8">
    <location>
        <begin position="286"/>
        <end position="291"/>
    </location>
</feature>
<feature type="turn" evidence="8">
    <location>
        <begin position="293"/>
        <end position="295"/>
    </location>
</feature>
<feature type="strand" evidence="8">
    <location>
        <begin position="298"/>
        <end position="303"/>
    </location>
</feature>
<feature type="helix" evidence="8">
    <location>
        <begin position="304"/>
        <end position="306"/>
    </location>
</feature>
<feature type="helix" evidence="8">
    <location>
        <begin position="307"/>
        <end position="323"/>
    </location>
</feature>
<feature type="turn" evidence="8">
    <location>
        <begin position="324"/>
        <end position="326"/>
    </location>
</feature>
<feature type="helix" evidence="8">
    <location>
        <begin position="328"/>
        <end position="344"/>
    </location>
</feature>
<feature type="turn" evidence="8">
    <location>
        <begin position="345"/>
        <end position="347"/>
    </location>
</feature>
<feature type="strand" evidence="8">
    <location>
        <begin position="349"/>
        <end position="351"/>
    </location>
</feature>
<feature type="strand" evidence="8">
    <location>
        <begin position="357"/>
        <end position="359"/>
    </location>
</feature>
<feature type="helix" evidence="8">
    <location>
        <begin position="360"/>
        <end position="365"/>
    </location>
</feature>
<feature type="helix" evidence="8">
    <location>
        <begin position="367"/>
        <end position="370"/>
    </location>
</feature>
<feature type="helix" evidence="8">
    <location>
        <begin position="377"/>
        <end position="383"/>
    </location>
</feature>
<feature type="helix" evidence="8">
    <location>
        <begin position="389"/>
        <end position="402"/>
    </location>
</feature>
<feature type="strand" evidence="8">
    <location>
        <begin position="408"/>
        <end position="415"/>
    </location>
</feature>
<feature type="helix" evidence="8">
    <location>
        <begin position="417"/>
        <end position="419"/>
    </location>
</feature>
<feature type="helix" evidence="8">
    <location>
        <begin position="434"/>
        <end position="454"/>
    </location>
</feature>
<feature type="turn" evidence="8">
    <location>
        <begin position="458"/>
        <end position="463"/>
    </location>
</feature>
<feature type="strand" evidence="8">
    <location>
        <begin position="466"/>
        <end position="473"/>
    </location>
</feature>
<feature type="strand" evidence="8">
    <location>
        <begin position="475"/>
        <end position="477"/>
    </location>
</feature>
<feature type="helix" evidence="8">
    <location>
        <begin position="483"/>
        <end position="486"/>
    </location>
</feature>
<feature type="helix" evidence="8">
    <location>
        <begin position="510"/>
        <end position="515"/>
    </location>
</feature>
<feature type="strand" evidence="8">
    <location>
        <begin position="522"/>
        <end position="529"/>
    </location>
</feature>
<feature type="helix" evidence="8">
    <location>
        <begin position="531"/>
        <end position="535"/>
    </location>
</feature>
<feature type="helix" evidence="8">
    <location>
        <begin position="537"/>
        <end position="553"/>
    </location>
</feature>
<feature type="strand" evidence="8">
    <location>
        <begin position="561"/>
        <end position="563"/>
    </location>
</feature>
<organism>
    <name type="scientific">Caenorhabditis elegans</name>
    <dbReference type="NCBI Taxonomy" id="6239"/>
    <lineage>
        <taxon>Eukaryota</taxon>
        <taxon>Metazoa</taxon>
        <taxon>Ecdysozoa</taxon>
        <taxon>Nematoda</taxon>
        <taxon>Chromadorea</taxon>
        <taxon>Rhabditida</taxon>
        <taxon>Rhabditina</taxon>
        <taxon>Rhabditomorpha</taxon>
        <taxon>Rhabditoidea</taxon>
        <taxon>Rhabditidae</taxon>
        <taxon>Peloderinae</taxon>
        <taxon>Caenorhabditis</taxon>
    </lineage>
</organism>
<evidence type="ECO:0000250" key="1">
    <source>
        <dbReference type="UniProtKB" id="Q9Y3Z3"/>
    </source>
</evidence>
<evidence type="ECO:0000255" key="2">
    <source>
        <dbReference type="PROSITE-ProRule" id="PRU01175"/>
    </source>
</evidence>
<evidence type="ECO:0000256" key="3">
    <source>
        <dbReference type="SAM" id="MobiDB-lite"/>
    </source>
</evidence>
<evidence type="ECO:0000269" key="4">
    <source>
    </source>
</evidence>
<evidence type="ECO:0000303" key="5">
    <source>
    </source>
</evidence>
<evidence type="ECO:0000305" key="6"/>
<evidence type="ECO:0000312" key="7">
    <source>
        <dbReference type="PDB" id="6PWY"/>
    </source>
</evidence>
<evidence type="ECO:0007829" key="8">
    <source>
        <dbReference type="PDB" id="6PWY"/>
    </source>
</evidence>
<reference key="1">
    <citation type="journal article" date="1998" name="Science">
        <title>Genome sequence of the nematode C. elegans: a platform for investigating biology.</title>
        <authorList>
            <consortium name="The C. elegans sequencing consortium"/>
        </authorList>
    </citation>
    <scope>NUCLEOTIDE SEQUENCE [LARGE SCALE GENOMIC DNA]</scope>
    <scope>ALTERNATIVE SPLICING</scope>
    <source>
        <strain>Bristol N2</strain>
    </source>
</reference>
<reference evidence="7" key="2">
    <citation type="journal article" date="2023" name="J. Biol. Chem.">
        <title>Biochemical Functions and Structure of Caenorhabditis elegans ZK177.8 protein: Aicardi-Goutieres Syndrome SAMHD1 dNTPase Ortholog.</title>
        <authorList>
            <person name="Maehigashi T."/>
            <person name="Lim C."/>
            <person name="Wade L.R."/>
            <person name="Bowen N.E."/>
            <person name="Knecht K.M."/>
            <person name="Alvarez N.N."/>
            <person name="Kelly W.G."/>
            <person name="Schinazi R.F."/>
            <person name="Kim D.H."/>
            <person name="Xiong Y."/>
            <person name="Kim B."/>
        </authorList>
    </citation>
    <scope>X-RAY CRYSTALLOGRAPHY (1.8 ANGSTROMS) OF 41-565 OF MUTANT 134-ARG-ASN-135 IN COMPLEX WITH DATP</scope>
    <scope>FUNCTION</scope>
    <scope>CATALYTIC ACTIVITY</scope>
    <scope>ACTIVITY REGULATION</scope>
    <scope>SUBUNIT</scope>
    <scope>MUTAGENESIS OF 134-HIS-ASP-135</scope>
</reference>
<proteinExistence type="evidence at protein level"/>
<comment type="function">
    <text evidence="1 4">Has deoxynucleoside triphosphate (dNTPase) activity (PubMed:37567474). dNTPase activity acts as a regulator of DNA precursor pools by regulating dNTP pools (By similarity). Phosphorylation acts as a switch to control dNTPase-dependent and -independent functions (By similarity).</text>
</comment>
<comment type="catalytic activity">
    <reaction evidence="4">
        <text>a 2'-deoxyribonucleoside 5'-triphosphate + H2O = a 2'-deoxyribonucleoside + triphosphate + H(+)</text>
        <dbReference type="Rhea" id="RHEA:46148"/>
        <dbReference type="ChEBI" id="CHEBI:15377"/>
        <dbReference type="ChEBI" id="CHEBI:15378"/>
        <dbReference type="ChEBI" id="CHEBI:18036"/>
        <dbReference type="ChEBI" id="CHEBI:18274"/>
        <dbReference type="ChEBI" id="CHEBI:61560"/>
    </reaction>
</comment>
<comment type="cofactor">
    <cofactor evidence="1">
        <name>Zn(2+)</name>
        <dbReference type="ChEBI" id="CHEBI:29105"/>
    </cofactor>
    <text evidence="1">Binds 1 zinc ion per subunit.</text>
</comment>
<comment type="activity regulation">
    <text evidence="1 4">Allosterically activated and regulated by GTP or dGTP (PubMed:37567474). Allosteric activation promotes the formation of highly active homotetramers (By similarity). Phosphorylation impairs homotetramerization, thereby inhibiting dNTPase activity (By similarity).</text>
</comment>
<comment type="subunit">
    <text evidence="4">Homodimer (PubMed:37567474). Homotetramer; in dGTP-bound form (PubMed:37567474).</text>
</comment>
<comment type="subcellular location">
    <subcellularLocation>
        <location evidence="1">Nucleus</location>
    </subcellularLocation>
    <subcellularLocation>
        <location evidence="1">Chromosome</location>
    </subcellularLocation>
</comment>
<comment type="alternative products">
    <event type="alternative splicing"/>
    <isoform>
        <id>Q09374-1</id>
        <name>a</name>
        <sequence type="displayed"/>
    </isoform>
    <isoform>
        <id>Q09374-2</id>
        <name>b</name>
        <sequence type="described" ref="VSP_002452"/>
    </isoform>
</comment>
<comment type="miscellaneous">
    <text evidence="4">Does not hydrolyze dGMP and dGDP (PubMed:37567474). Shows significantly reduced capability to hydrolyze the chain terminator triphosphates ddGTP, ddITP, ddTTP or 3'-azido-3'-deoxythymidine (AZT), in the presence of dGTP activator (PubMed:37567474). Able to hydrolyze an anti-cancer agent, araCTP (PubMed:37567474).</text>
</comment>
<comment type="similarity">
    <text evidence="6">Belongs to the SAMHD1 family.</text>
</comment>
<sequence length="587" mass="66493">MDSGQPWFPKIHTKEVRRRLSSLNIATPSSSPCNMNWQSLEPKHIINDNVYGTVKVPRPIDKLIDTVEFQRLRHLKQTGLVYLVYPNCEHSRFVHSLGTFSLAYALVDKLRHSQPSLNITESDLICTSVAALLHDVGHGPFSHLFDGEFAKRNGSRFKHEDMSILIIKKIMNKPEIKSEFACILGETDEEYAKSVTLITELISGKPFDFQDMDGFKDLPADVREETVKNEWAIIGCGPEKSFLFDVVSNSYNGHDVDKMDYLLRDSKASGVGITFSESTLERLFNHVRVVIDPNSGLKRIAYSIKCIGDLKAIGDSRQELHSKVYQHKAVRFMETLMVDALINAGDFLKYKGSNGELYSLKNVTEDVDAFLKTTDYVEQEILNSQITDPKMIEAQTALLKIQRREIGCKLGYFEMNPENATQLKGNCNNQTGAAEVVKKVGQKMKEILEQMDDTEEMDGKLKDIQFTVMHSVLGRGLDDKTHPIERQIFYDGKPSEHEGKQVVGFYPSEDYVINNCPRMATKWEIFVMGDRSLRKEPLLADRVKRALQLAGESEKFLTPRKRSPQDSPDEVSSSCSTAKRRLEFGSS</sequence>
<keyword id="KW-0002">3D-structure</keyword>
<keyword id="KW-0021">Allosteric enzyme</keyword>
<keyword id="KW-0025">Alternative splicing</keyword>
<keyword id="KW-0158">Chromosome</keyword>
<keyword id="KW-0342">GTP-binding</keyword>
<keyword id="KW-0378">Hydrolase</keyword>
<keyword id="KW-0479">Metal-binding</keyword>
<keyword id="KW-0547">Nucleotide-binding</keyword>
<keyword id="KW-0539">Nucleus</keyword>
<keyword id="KW-0597">Phosphoprotein</keyword>
<keyword id="KW-1185">Reference proteome</keyword>
<keyword id="KW-0862">Zinc</keyword>
<protein>
    <recommendedName>
        <fullName evidence="1 6">Deoxynucleoside triphosphate triphosphohydrolase sahd-1</fullName>
        <shortName evidence="5">dNTPase</shortName>
        <ecNumber evidence="1">3.1.5.-</ecNumber>
    </recommendedName>
    <alternativeName>
        <fullName evidence="6">SAM domain and HD domain-containing protein 1</fullName>
    </alternativeName>
    <alternativeName>
        <fullName evidence="6">SAMHD1 homolog</fullName>
    </alternativeName>
</protein>
<name>SAMH1_CAEEL</name>
<gene>
    <name evidence="6" type="primary">sahd-1</name>
    <name type="ORF">ZK177.8</name>
</gene>
<accession>Q09374</accession>
<accession>Q95PX5</accession>